<organismHost>
    <name type="scientific">Escherichia coli</name>
    <dbReference type="NCBI Taxonomy" id="562"/>
</organismHost>
<reference key="1">
    <citation type="journal article" date="1987" name="Nucleic Acids Res.">
        <title>Nucleotide sequence of gene t (lysis gene) of the E. coli phage T4.</title>
        <authorList>
            <person name="Montag D."/>
            <person name="Degen M."/>
            <person name="Henning U."/>
        </authorList>
    </citation>
    <scope>NUCLEOTIDE SEQUENCE [GENOMIC DNA]</scope>
</reference>
<reference key="2">
    <citation type="journal article" date="2003" name="Microbiol. Mol. Biol. Rev.">
        <title>Bacteriophage T4 genome.</title>
        <authorList>
            <person name="Miller E.S."/>
            <person name="Kutter E."/>
            <person name="Mosig G."/>
            <person name="Arisaka F."/>
            <person name="Kunisawa T."/>
            <person name="Ruger W."/>
        </authorList>
    </citation>
    <scope>NUCLEOTIDE SEQUENCE [LARGE SCALE GENOMIC DNA]</scope>
</reference>
<reference key="3">
    <citation type="journal article" date="1987" name="J. Mol. Biol.">
        <title>Receptor-recognizing proteins of T-even type bacteriophages. Constant and hypervariable regions and an unusual case of evolution.</title>
        <authorList>
            <person name="Montag D."/>
            <person name="Riede I."/>
            <person name="Eschbach M.-L."/>
            <person name="Degen M."/>
            <person name="Henning U."/>
        </authorList>
    </citation>
    <scope>NUCLEOTIDE SEQUENCE [GENOMIC DNA] OF 1-34</scope>
</reference>
<reference key="4">
    <citation type="journal article" date="1993" name="J. Bacteriol.">
        <title>The asiA gene of bacteriophage T4 codes for the anti-sigma 70 protein.</title>
        <authorList>
            <person name="Orsini G."/>
            <person name="Ouhammouch M."/>
            <person name="Le Caer J.-P."/>
            <person name="Brody E.N."/>
        </authorList>
    </citation>
    <scope>NUCLEOTIDE SEQUENCE [GENOMIC DNA] OF 202-218</scope>
    <source>
        <strain>D</strain>
    </source>
</reference>
<reference key="5">
    <citation type="journal article" date="2001" name="Gene">
        <title>Genetic analysis of the T4 holin: timing and topology.</title>
        <authorList>
            <person name="Ramanculov E."/>
            <person name="Young R."/>
        </authorList>
    </citation>
    <scope>FUNCTION</scope>
    <scope>TOPOLOGY</scope>
</reference>
<reference key="6">
    <citation type="journal article" date="2005" name="J. Bacteriol.">
        <title>Periplasmic domains define holin-antiholin interactions in t4 lysis inhibition.</title>
        <authorList>
            <person name="Tran T.A."/>
            <person name="Struck D.K."/>
            <person name="Young R."/>
        </authorList>
    </citation>
    <scope>INTERACTION WITH ANTIHOLIN</scope>
    <scope>SUBCELLULAR LOCATION</scope>
    <scope>FUNCTION</scope>
</reference>
<reference key="7">
    <citation type="journal article" date="2012" name="Protein Sci.">
        <title>Protein determinants of phage T4 lysis inhibition.</title>
        <authorList>
            <person name="Moussa S.H."/>
            <person name="Kuznetsov V."/>
            <person name="Tran T.A."/>
            <person name="Sacchettini J.C."/>
            <person name="Young R."/>
        </authorList>
    </citation>
    <scope>FUNCTION</scope>
    <scope>MUTAGENESIS OF CYS-175 AND CYS-207</scope>
    <scope>DISULFIDE BOND</scope>
</reference>
<reference key="8">
    <citation type="journal article" date="2016" name="J. Bacteriol.">
        <title>The last r locus unveiled: T4 RIII is a cytoplasmic antiholin.</title>
        <authorList>
            <person name="Chen Y."/>
            <person name="Young R."/>
        </authorList>
    </citation>
    <scope>INTERACTION WITH LYSIS INHIBITION ACCESSORY PROTEIN</scope>
</reference>
<reference key="9">
    <citation type="journal article" date="2021" name="Front. Microbiol.">
        <title>The Phage T4 Antiholin RI Has a Cleavable Signal Peptide, Not a SAR Domain.</title>
        <authorList>
            <person name="Mehner-Breitfeld D."/>
            <person name="Schwarzkopf J.M.F."/>
            <person name="Young R."/>
            <person name="Kondabagil K."/>
            <person name="Brueser T."/>
        </authorList>
    </citation>
    <scope>DOMAIN</scope>
    <scope>FUNCTION</scope>
</reference>
<reference evidence="10 11 12" key="10">
    <citation type="journal article" date="2020" name="J. Mol. Biol.">
        <title>The Structural Basis of T4 Phage Lysis Control: DNA as the Signal for Lysis Inhibition.</title>
        <authorList>
            <person name="Krieger I.V."/>
            <person name="Kuznetsov V."/>
            <person name="Chang J.Y."/>
            <person name="Zhang J."/>
            <person name="Moussa S.H."/>
            <person name="Young R.F."/>
            <person name="Sacchettini J.C."/>
        </authorList>
    </citation>
    <scope>X-RAY CRYSTALLOGRAPHY (1.65 ANGSTROMS) OF 77-218 IN COMPLEX WITH ANTIHOLIN</scope>
    <scope>SUBUNIT</scope>
    <scope>FUNCTION</scope>
</reference>
<gene>
    <name type="primary">t</name>
    <name type="synonym">rV</name>
</gene>
<sequence>MAAPRISFSPSDILFGVLDRLFKDNATGKVLASRVAVVILLFIMAIVWYRGDSFFEYYKQSKYETYSEIIEKERTARFESVALEQLQIVHISSEADFSAVYSFRPKNLNYFVDIIAYEGKLPSTISEKSLGGYPVDKTMDEYTVHLNGRHYYSNSKFAFLPTKKPTPEINYMYSCPYFNLDNIYAGTITMYWYRNDHISNDRLESICAQAARILGRAK</sequence>
<protein>
    <recommendedName>
        <fullName evidence="1">Holin</fullName>
    </recommendedName>
    <alternativeName>
        <fullName>Lysis protein</fullName>
    </alternativeName>
    <alternativeName>
        <fullName>Protein rV</fullName>
    </alternativeName>
</protein>
<dbReference type="EMBL" id="Y00408">
    <property type="protein sequence ID" value="CAA68470.1"/>
    <property type="molecule type" value="Genomic_DNA"/>
</dbReference>
<dbReference type="EMBL" id="AF158101">
    <property type="protein sequence ID" value="AAD42661.1"/>
    <property type="molecule type" value="Genomic_DNA"/>
</dbReference>
<dbReference type="EMBL" id="X05677">
    <property type="protein sequence ID" value="CAA29164.1"/>
    <property type="molecule type" value="Genomic_DNA"/>
</dbReference>
<dbReference type="EMBL" id="M99441">
    <property type="protein sequence ID" value="AAA32481.1"/>
    <property type="molecule type" value="Genomic_DNA"/>
</dbReference>
<dbReference type="PIR" id="JF0028">
    <property type="entry name" value="YVBPT4"/>
</dbReference>
<dbReference type="RefSeq" id="NP_049865.1">
    <property type="nucleotide sequence ID" value="NC_000866.4"/>
</dbReference>
<dbReference type="PDB" id="6PSK">
    <property type="method" value="X-ray"/>
    <property type="resolution" value="2.20 A"/>
    <property type="chains" value="T=77-218"/>
</dbReference>
<dbReference type="PDB" id="6PX4">
    <property type="method" value="X-ray"/>
    <property type="resolution" value="1.65 A"/>
    <property type="chains" value="B/T=77-218"/>
</dbReference>
<dbReference type="PDB" id="6PXE">
    <property type="method" value="X-ray"/>
    <property type="resolution" value="2.30 A"/>
    <property type="chains" value="B/D/F/T=55-218"/>
</dbReference>
<dbReference type="PDBsum" id="6PSK"/>
<dbReference type="PDBsum" id="6PX4"/>
<dbReference type="PDBsum" id="6PXE"/>
<dbReference type="SMR" id="P06808"/>
<dbReference type="TCDB" id="1.E.8.1.1">
    <property type="family name" value="the t4 holin (t4 holin) family"/>
</dbReference>
<dbReference type="GeneID" id="1258610"/>
<dbReference type="KEGG" id="vg:1258610"/>
<dbReference type="OrthoDB" id="7885at10239"/>
<dbReference type="Proteomes" id="UP000009087">
    <property type="component" value="Segment"/>
</dbReference>
<dbReference type="GO" id="GO:0020002">
    <property type="term" value="C:host cell plasma membrane"/>
    <property type="evidence" value="ECO:0007669"/>
    <property type="project" value="UniProtKB-SubCell"/>
</dbReference>
<dbReference type="GO" id="GO:0016020">
    <property type="term" value="C:membrane"/>
    <property type="evidence" value="ECO:0007669"/>
    <property type="project" value="UniProtKB-UniRule"/>
</dbReference>
<dbReference type="GO" id="GO:0140911">
    <property type="term" value="F:pore-forming activity"/>
    <property type="evidence" value="ECO:0007669"/>
    <property type="project" value="UniProtKB-UniRule"/>
</dbReference>
<dbReference type="GO" id="GO:0044659">
    <property type="term" value="P:viral release from host cell by cytolysis"/>
    <property type="evidence" value="ECO:0007669"/>
    <property type="project" value="InterPro"/>
</dbReference>
<dbReference type="HAMAP" id="MF_04104">
    <property type="entry name" value="HOLIN_T4"/>
    <property type="match status" value="1"/>
</dbReference>
<dbReference type="InterPro" id="IPR020982">
    <property type="entry name" value="Phage_T4_GpT_holin"/>
</dbReference>
<dbReference type="Pfam" id="PF11031">
    <property type="entry name" value="Phage_holin_T"/>
    <property type="match status" value="1"/>
</dbReference>
<organism>
    <name type="scientific">Enterobacteria phage T4</name>
    <name type="common">Bacteriophage T4</name>
    <dbReference type="NCBI Taxonomy" id="10665"/>
    <lineage>
        <taxon>Viruses</taxon>
        <taxon>Duplodnaviria</taxon>
        <taxon>Heunggongvirae</taxon>
        <taxon>Uroviricota</taxon>
        <taxon>Caudoviricetes</taxon>
        <taxon>Straboviridae</taxon>
        <taxon>Tevenvirinae</taxon>
        <taxon>Tequatrovirus</taxon>
    </lineage>
</organism>
<name>HOLIN_BPT4</name>
<accession>P06808</accession>
<comment type="function">
    <text evidence="1 2 3 4 5 6 7">Accumulates harmlessly in the cytoplasmic membrane until it reaches a critical concentration that triggers the formation of micron-scale pores (holes) causing host cell membrane disruption and endolysin escape into the periplasmic space (PubMed:11255004). Determines the precise timing of host cell lysis (PubMed:22389108). Regulated by specific antiholins that somehow sense superinfections and then delay lysis (PubMed:16166524, PubMed:22389108, PubMed:27381920, PubMed:32562709, PubMed:34456892). Participates with the endolysin and spanin proteins in the sequential events which lead to the programmed host cell lysis releasing the mature viral particles from the host cell.</text>
</comment>
<comment type="subunit">
    <text evidence="1 3 5 6">Homomultimer. Heterotetramer composed of 2 holin and 2 antiholin (PubMed:32562709). The holin-antiholin complex binds dsDNA (PubMed:32562709). Interacts (via C-terminus) with antiholin (via C-terminus); this interaction blocks the holin homomultimerization and delays host cell lysis (PubMed:16166524). Interacts (via N-terminus) with the lysis inhibition accessory protein rIII; this interaction stabilizes the holin-antiholin complex thereby resulting in a robust block of the hole formation (PubMed:27381920).</text>
</comment>
<comment type="subcellular location">
    <subcellularLocation>
        <location evidence="1 9">Host cell inner membrane</location>
        <topology evidence="1 9">Single-pass type II membrane protein</topology>
        <orientation evidence="1 9">Periplasmic side</orientation>
    </subcellularLocation>
    <text evidence="1">Classified as a class III holin.</text>
</comment>
<comment type="domain">
    <text evidence="1 7">The C-terminus serves, in association with the antiholin, as a DNA sensor for lysis inhibition under superinfection conditions.</text>
</comment>
<comment type="PTM">
    <text evidence="1 4">Disulfide bond is required for functionality.</text>
</comment>
<comment type="similarity">
    <text evidence="1">Belongs to the T4likevirus holin family.</text>
</comment>
<feature type="chain" id="PRO_0000165066" description="Holin">
    <location>
        <begin position="1"/>
        <end position="218"/>
    </location>
</feature>
<feature type="topological domain" description="Cytoplasmic" evidence="1 8">
    <location>
        <begin position="1"/>
        <end position="34"/>
    </location>
</feature>
<feature type="transmembrane region" description="Helical; Signal-anchor for type II membrane protein" evidence="1 8">
    <location>
        <begin position="35"/>
        <end position="49"/>
    </location>
</feature>
<feature type="topological domain" description="Periplasmic" evidence="1 8">
    <location>
        <begin position="50"/>
        <end position="218"/>
    </location>
</feature>
<feature type="disulfide bond" evidence="1 4 6">
    <location>
        <begin position="175"/>
        <end position="207"/>
    </location>
</feature>
<feature type="mutagenesis site" description="Complete loss of lysis." evidence="4">
    <original>C</original>
    <variation>S</variation>
    <location>
        <position position="175"/>
    </location>
</feature>
<feature type="mutagenesis site" description="Complete loss of lysis." evidence="4">
    <original>C</original>
    <variation>S</variation>
    <location>
        <position position="207"/>
    </location>
</feature>
<feature type="helix" evidence="14">
    <location>
        <begin position="67"/>
        <end position="71"/>
    </location>
</feature>
<feature type="helix" evidence="13">
    <location>
        <begin position="78"/>
        <end position="93"/>
    </location>
</feature>
<feature type="strand" evidence="13">
    <location>
        <begin position="96"/>
        <end position="105"/>
    </location>
</feature>
<feature type="turn" evidence="13">
    <location>
        <begin position="106"/>
        <end position="108"/>
    </location>
</feature>
<feature type="strand" evidence="13">
    <location>
        <begin position="111"/>
        <end position="119"/>
    </location>
</feature>
<feature type="helix" evidence="14">
    <location>
        <begin position="123"/>
        <end position="125"/>
    </location>
</feature>
<feature type="helix" evidence="13">
    <location>
        <begin position="127"/>
        <end position="129"/>
    </location>
</feature>
<feature type="strand" evidence="14">
    <location>
        <begin position="131"/>
        <end position="134"/>
    </location>
</feature>
<feature type="helix" evidence="13">
    <location>
        <begin position="140"/>
        <end position="146"/>
    </location>
</feature>
<feature type="strand" evidence="13">
    <location>
        <begin position="151"/>
        <end position="155"/>
    </location>
</feature>
<feature type="strand" evidence="13">
    <location>
        <begin position="158"/>
        <end position="161"/>
    </location>
</feature>
<feature type="strand" evidence="13">
    <location>
        <begin position="171"/>
        <end position="178"/>
    </location>
</feature>
<feature type="strand" evidence="13">
    <location>
        <begin position="182"/>
        <end position="195"/>
    </location>
</feature>
<feature type="helix" evidence="13">
    <location>
        <begin position="200"/>
        <end position="214"/>
    </location>
</feature>
<evidence type="ECO:0000255" key="1">
    <source>
        <dbReference type="HAMAP-Rule" id="MF_04104"/>
    </source>
</evidence>
<evidence type="ECO:0000269" key="2">
    <source>
    </source>
</evidence>
<evidence type="ECO:0000269" key="3">
    <source>
    </source>
</evidence>
<evidence type="ECO:0000269" key="4">
    <source>
    </source>
</evidence>
<evidence type="ECO:0000269" key="5">
    <source>
    </source>
</evidence>
<evidence type="ECO:0000269" key="6">
    <source>
    </source>
</evidence>
<evidence type="ECO:0000269" key="7">
    <source>
    </source>
</evidence>
<evidence type="ECO:0000305" key="8">
    <source>
    </source>
</evidence>
<evidence type="ECO:0000305" key="9">
    <source>
    </source>
</evidence>
<evidence type="ECO:0007744" key="10">
    <source>
        <dbReference type="PDB" id="6PSK"/>
    </source>
</evidence>
<evidence type="ECO:0007744" key="11">
    <source>
        <dbReference type="PDB" id="6PX4"/>
    </source>
</evidence>
<evidence type="ECO:0007744" key="12">
    <source>
        <dbReference type="PDB" id="6PXE"/>
    </source>
</evidence>
<evidence type="ECO:0007829" key="13">
    <source>
        <dbReference type="PDB" id="6PX4"/>
    </source>
</evidence>
<evidence type="ECO:0007829" key="14">
    <source>
        <dbReference type="PDB" id="6PXE"/>
    </source>
</evidence>
<keyword id="KW-0002">3D-structure</keyword>
<keyword id="KW-0204">Cytolysis</keyword>
<keyword id="KW-1015">Disulfide bond</keyword>
<keyword id="KW-1030">Host cell inner membrane</keyword>
<keyword id="KW-0578">Host cell lysis by virus</keyword>
<keyword id="KW-1032">Host cell membrane</keyword>
<keyword id="KW-1043">Host membrane</keyword>
<keyword id="KW-0472">Membrane</keyword>
<keyword id="KW-1185">Reference proteome</keyword>
<keyword id="KW-0735">Signal-anchor</keyword>
<keyword id="KW-0812">Transmembrane</keyword>
<keyword id="KW-1133">Transmembrane helix</keyword>
<keyword id="KW-1188">Viral release from host cell</keyword>
<proteinExistence type="evidence at protein level"/>